<comment type="function">
    <text evidence="4 7 8 14">Superoxide dismutases serve to convert damaging superoxide radicals, a key form of ROS, to less damaging hydrogen peroxide that can be converted into water by catalase action. Degrades host-derived reactive oxygen species to escape innate immune surveillance. Involved in the occurrence of miconazole-tolerant persisters in biofilms. Persisters are cells that survive high doses of an antimicrobial agent. The unusual attributes of SOD5-like fungal proteins, including the absence of zinc and an open active site that readily captures extracellular copper, make these SODs well suited to meet challenges in zinc and copper availability at the host-pathogen interface.</text>
</comment>
<comment type="catalytic activity">
    <reaction evidence="14">
        <text>2 superoxide + 2 H(+) = H2O2 + O2</text>
        <dbReference type="Rhea" id="RHEA:20696"/>
        <dbReference type="ChEBI" id="CHEBI:15378"/>
        <dbReference type="ChEBI" id="CHEBI:15379"/>
        <dbReference type="ChEBI" id="CHEBI:16240"/>
        <dbReference type="ChEBI" id="CHEBI:18421"/>
        <dbReference type="EC" id="1.15.1.1"/>
    </reaction>
</comment>
<comment type="cofactor">
    <cofactor evidence="14">
        <name>Cu cation</name>
        <dbReference type="ChEBI" id="CHEBI:23378"/>
    </cofactor>
    <text evidence="14">Binds 1 copper ion per subunit.</text>
</comment>
<comment type="activity regulation">
    <text evidence="14">Secreted in a disulfide-oxidized form and apo-pools of secreted SOD5 can readily capture extracellular copper for rapid induction of enzyme activity.</text>
</comment>
<comment type="subunit">
    <text evidence="14">Monomer.</text>
</comment>
<comment type="subcellular location">
    <subcellularLocation>
        <location evidence="11">Secreted</location>
        <location evidence="11">Cell wall</location>
    </subcellularLocation>
    <subcellularLocation>
        <location evidence="1">Membrane</location>
        <topology evidence="1">Lipid-anchor</topology>
        <topology evidence="1">GPI-anchor</topology>
    </subcellularLocation>
    <text evidence="1">Covalently-linked GPI-modified cell wall protein (GPI-CWP).</text>
</comment>
<comment type="induction">
    <text evidence="4 5 6 9 10 11 12 13">Induced during yeast-to-hyphal transition and by osmotic and oxidative stresses. Expression is also increased when cells were grown on nonfermentable substrates as the only carbon source, in serum, and in the presence of neutrophils. Down-regulated by shikonin. Expression is controlled by EFG1, NRG1 and RIM101.</text>
</comment>
<comment type="PTM">
    <text evidence="1">The GPI-anchor is attached to the protein in the endoplasmic reticulum and serves to target the protein to the cell surface. There, the glucosamine-inositol phospholipid moiety is cleaved off and the GPI-modified mannoprotein is covalently attached via its lipidless GPI glycan remnant to the 1,6-beta-glucan of the outer cell wall layer (By similarity).</text>
</comment>
<comment type="disruption phenotype">
    <text evidence="4">Leads to sensitivity to hydrogen peroxide when cells were grown in nutrient-limited conditions.</text>
</comment>
<comment type="similarity">
    <text evidence="15">Belongs to the Cu-Zn superoxide dismutase family.</text>
</comment>
<comment type="caution">
    <text evidence="16">Although the beta-barrel of Cu/Zn SODs is largely preserved, SOD5 is a monomeric copper protein that lacks a zinc-binding site and is missing the electrostatic loop element proposed to promote catalysis through superoxide guidance. Without an electrostatic loop, the copper site of SOD5 is not recessed and is readily accessible to bulk solvent (PubMed:24711423).</text>
</comment>
<dbReference type="EC" id="1.15.1.1"/>
<dbReference type="EMBL" id="CP017624">
    <property type="protein sequence ID" value="AOW27120.1"/>
    <property type="molecule type" value="Genomic_DNA"/>
</dbReference>
<dbReference type="RefSeq" id="XP_719507.1">
    <property type="nucleotide sequence ID" value="XM_714414.1"/>
</dbReference>
<dbReference type="PDB" id="4N3T">
    <property type="method" value="X-ray"/>
    <property type="resolution" value="1.40 A"/>
    <property type="chains" value="A=27-181"/>
</dbReference>
<dbReference type="PDB" id="4N3U">
    <property type="method" value="X-ray"/>
    <property type="resolution" value="1.75 A"/>
    <property type="chains" value="A=27-181"/>
</dbReference>
<dbReference type="PDB" id="5CU9">
    <property type="method" value="X-ray"/>
    <property type="resolution" value="1.48 A"/>
    <property type="chains" value="A=27-181"/>
</dbReference>
<dbReference type="PDB" id="5KBK">
    <property type="method" value="X-ray"/>
    <property type="resolution" value="1.41 A"/>
    <property type="chains" value="A=27-181"/>
</dbReference>
<dbReference type="PDB" id="5KBL">
    <property type="method" value="X-ray"/>
    <property type="resolution" value="1.41 A"/>
    <property type="chains" value="A=27-181"/>
</dbReference>
<dbReference type="PDB" id="5KBM">
    <property type="method" value="X-ray"/>
    <property type="resolution" value="1.42 A"/>
    <property type="chains" value="A=27-181"/>
</dbReference>
<dbReference type="PDBsum" id="4N3T"/>
<dbReference type="PDBsum" id="4N3U"/>
<dbReference type="PDBsum" id="5CU9"/>
<dbReference type="PDBsum" id="5KBK"/>
<dbReference type="PDBsum" id="5KBL"/>
<dbReference type="PDBsum" id="5KBM"/>
<dbReference type="SMR" id="Q5AD07"/>
<dbReference type="STRING" id="237561.Q5AD07"/>
<dbReference type="GlyCosmos" id="Q5AD07">
    <property type="glycosylation" value="8 sites, No reported glycans"/>
</dbReference>
<dbReference type="EnsemblFungi" id="C2_00680C_A-T">
    <property type="protein sequence ID" value="C2_00680C_A-T-p1"/>
    <property type="gene ID" value="C2_00680C_A"/>
</dbReference>
<dbReference type="GeneID" id="3638886"/>
<dbReference type="KEGG" id="cal:CAALFM_C200680CA"/>
<dbReference type="CGD" id="CAL0000188676">
    <property type="gene designation" value="SOD5"/>
</dbReference>
<dbReference type="VEuPathDB" id="FungiDB:C2_00680C_A"/>
<dbReference type="eggNOG" id="ENOG502S5NX">
    <property type="taxonomic scope" value="Eukaryota"/>
</dbReference>
<dbReference type="HOGENOM" id="CLU_063073_1_1_1"/>
<dbReference type="InParanoid" id="Q5AD07"/>
<dbReference type="OrthoDB" id="159229at2759"/>
<dbReference type="EvolutionaryTrace" id="Q5AD07"/>
<dbReference type="PHI-base" id="PHI:383"/>
<dbReference type="PHI-base" id="PHI:8749"/>
<dbReference type="PRO" id="PR:Q5AD07"/>
<dbReference type="Proteomes" id="UP000000559">
    <property type="component" value="Chromosome 2"/>
</dbReference>
<dbReference type="GO" id="GO:0009986">
    <property type="term" value="C:cell surface"/>
    <property type="evidence" value="ECO:0000314"/>
    <property type="project" value="CGD"/>
</dbReference>
<dbReference type="GO" id="GO:0005576">
    <property type="term" value="C:extracellular region"/>
    <property type="evidence" value="ECO:0000314"/>
    <property type="project" value="CGD"/>
</dbReference>
<dbReference type="GO" id="GO:0009277">
    <property type="term" value="C:fungal-type cell wall"/>
    <property type="evidence" value="ECO:0000314"/>
    <property type="project" value="CGD"/>
</dbReference>
<dbReference type="GO" id="GO:0030446">
    <property type="term" value="C:hyphal cell wall"/>
    <property type="evidence" value="ECO:0000314"/>
    <property type="project" value="CGD"/>
</dbReference>
<dbReference type="GO" id="GO:0098552">
    <property type="term" value="C:side of membrane"/>
    <property type="evidence" value="ECO:0007669"/>
    <property type="project" value="UniProtKB-KW"/>
</dbReference>
<dbReference type="GO" id="GO:0005507">
    <property type="term" value="F:copper ion binding"/>
    <property type="evidence" value="ECO:0000314"/>
    <property type="project" value="CGD"/>
</dbReference>
<dbReference type="GO" id="GO:0004784">
    <property type="term" value="F:superoxide dismutase activity"/>
    <property type="evidence" value="ECO:0000314"/>
    <property type="project" value="CGD"/>
</dbReference>
<dbReference type="GO" id="GO:0034599">
    <property type="term" value="P:cellular response to oxidative stress"/>
    <property type="evidence" value="ECO:0000315"/>
    <property type="project" value="CGD"/>
</dbReference>
<dbReference type="GO" id="GO:0071451">
    <property type="term" value="P:cellular response to superoxide"/>
    <property type="evidence" value="ECO:0000314"/>
    <property type="project" value="CGD"/>
</dbReference>
<dbReference type="GO" id="GO:0019430">
    <property type="term" value="P:removal of superoxide radicals"/>
    <property type="evidence" value="ECO:0000318"/>
    <property type="project" value="GO_Central"/>
</dbReference>
<dbReference type="GO" id="GO:0006801">
    <property type="term" value="P:superoxide metabolic process"/>
    <property type="evidence" value="ECO:0000314"/>
    <property type="project" value="CGD"/>
</dbReference>
<dbReference type="GO" id="GO:0052164">
    <property type="term" value="P:symbiont defense to host-produced reactive oxygen species"/>
    <property type="evidence" value="ECO:0000315"/>
    <property type="project" value="CGD"/>
</dbReference>
<dbReference type="GO" id="GO:0042783">
    <property type="term" value="P:symbiont-mediated evasion of host immune response"/>
    <property type="evidence" value="ECO:0000315"/>
    <property type="project" value="CGD"/>
</dbReference>
<dbReference type="FunFam" id="2.60.40.200:FF:000007">
    <property type="entry name" value="Cell surface Cu-only superoxide dismutase 5"/>
    <property type="match status" value="1"/>
</dbReference>
<dbReference type="Gene3D" id="2.60.40.200">
    <property type="entry name" value="Superoxide dismutase, copper/zinc binding domain"/>
    <property type="match status" value="1"/>
</dbReference>
<dbReference type="InterPro" id="IPR017868">
    <property type="entry name" value="Filamin/ABP280_repeat-like"/>
</dbReference>
<dbReference type="InterPro" id="IPR036423">
    <property type="entry name" value="SOD-like_Cu/Zn_dom_sf"/>
</dbReference>
<dbReference type="InterPro" id="IPR024134">
    <property type="entry name" value="SOD_Cu/Zn_/chaperone"/>
</dbReference>
<dbReference type="InterPro" id="IPR001424">
    <property type="entry name" value="SOD_Cu_Zn_dom"/>
</dbReference>
<dbReference type="PANTHER" id="PTHR10003">
    <property type="entry name" value="SUPEROXIDE DISMUTASE CU-ZN -RELATED"/>
    <property type="match status" value="1"/>
</dbReference>
<dbReference type="Pfam" id="PF00080">
    <property type="entry name" value="Sod_Cu"/>
    <property type="match status" value="1"/>
</dbReference>
<dbReference type="SUPFAM" id="SSF49329">
    <property type="entry name" value="Cu,Zn superoxide dismutase-like"/>
    <property type="match status" value="1"/>
</dbReference>
<accession>Q5AD07</accession>
<accession>A0A1D8PG56</accession>
<keyword id="KW-0002">3D-structure</keyword>
<keyword id="KW-0049">Antioxidant</keyword>
<keyword id="KW-0134">Cell wall</keyword>
<keyword id="KW-0186">Copper</keyword>
<keyword id="KW-1015">Disulfide bond</keyword>
<keyword id="KW-0325">Glycoprotein</keyword>
<keyword id="KW-0336">GPI-anchor</keyword>
<keyword id="KW-0449">Lipoprotein</keyword>
<keyword id="KW-0472">Membrane</keyword>
<keyword id="KW-0479">Metal-binding</keyword>
<keyword id="KW-0560">Oxidoreductase</keyword>
<keyword id="KW-1185">Reference proteome</keyword>
<keyword id="KW-0964">Secreted</keyword>
<keyword id="KW-0732">Signal</keyword>
<keyword id="KW-0843">Virulence</keyword>
<sequence>MKYLSIFLLATFALAGDAPISTDSKGSPSLIAKFEKTSKSNIEGTIKFTPANNGTVSVSVDLKGLPSDIGPFPYHVHEKPVPASKNCSATENHFNPYNGTVRAATPAAHEVGDLAGKHGNIMGESYKTEYDDSYISLNEKSRSYIGGLSIVIHANNGTRLNCANITLLDEGHGNANTTMSNSSSSSSQSAVNTSSSMASTAPQGNGAERAVVNGLLAAGVVGVIAALI</sequence>
<protein>
    <recommendedName>
        <fullName>Cell surface Cu-only superoxide dismutase 5</fullName>
        <ecNumber>1.15.1.1</ecNumber>
    </recommendedName>
    <alternativeName>
        <fullName>Predicted GPI-anchored protein 3</fullName>
    </alternativeName>
</protein>
<gene>
    <name type="primary">SOD5</name>
    <name type="synonym">PGA3</name>
    <name type="synonym">SOD31</name>
    <name type="ordered locus">CAALFM_C200680CA</name>
    <name type="ORF">CaO19.2060</name>
    <name type="ORF">CaO19.9607</name>
</gene>
<feature type="signal peptide" evidence="2">
    <location>
        <begin position="1"/>
        <end position="15"/>
    </location>
</feature>
<feature type="chain" id="PRO_0000424636" description="Cell surface Cu-only superoxide dismutase 5">
    <location>
        <begin position="16"/>
        <end position="205"/>
    </location>
</feature>
<feature type="propeptide" id="PRO_0000424637" description="Removed in mature form" evidence="2">
    <location>
        <begin position="206"/>
        <end position="228"/>
    </location>
</feature>
<feature type="region of interest" description="Disordered" evidence="3">
    <location>
        <begin position="176"/>
        <end position="204"/>
    </location>
</feature>
<feature type="compositionally biased region" description="Low complexity" evidence="3">
    <location>
        <begin position="176"/>
        <end position="201"/>
    </location>
</feature>
<feature type="binding site">
    <location>
        <position position="75"/>
    </location>
    <ligand>
        <name>Cu cation</name>
        <dbReference type="ChEBI" id="CHEBI:23378"/>
        <note>catalytic</note>
    </ligand>
</feature>
<feature type="binding site">
    <location>
        <position position="77"/>
    </location>
    <ligand>
        <name>Cu cation</name>
        <dbReference type="ChEBI" id="CHEBI:23378"/>
        <note>catalytic</note>
    </ligand>
</feature>
<feature type="binding site">
    <location>
        <position position="93"/>
    </location>
    <ligand>
        <name>Cu cation</name>
        <dbReference type="ChEBI" id="CHEBI:23378"/>
        <note>catalytic</note>
    </ligand>
</feature>
<feature type="binding site">
    <location>
        <position position="153"/>
    </location>
    <ligand>
        <name>Cu cation</name>
        <dbReference type="ChEBI" id="CHEBI:23378"/>
        <note>catalytic</note>
    </ligand>
</feature>
<feature type="lipid moiety-binding region" description="GPI-anchor amidated asparagine" evidence="2">
    <location>
        <position position="205"/>
    </location>
</feature>
<feature type="glycosylation site" description="N-linked (GlcNAc...) asparagine" evidence="2">
    <location>
        <position position="53"/>
    </location>
</feature>
<feature type="glycosylation site" description="N-linked (GlcNAc...) asparagine" evidence="2">
    <location>
        <position position="86"/>
    </location>
</feature>
<feature type="glycosylation site" description="N-linked (GlcNAc...) asparagine" evidence="2">
    <location>
        <position position="98"/>
    </location>
</feature>
<feature type="glycosylation site" description="N-linked (GlcNAc...) asparagine" evidence="2">
    <location>
        <position position="156"/>
    </location>
</feature>
<feature type="glycosylation site" description="N-linked (GlcNAc...) asparagine" evidence="2">
    <location>
        <position position="164"/>
    </location>
</feature>
<feature type="glycosylation site" description="N-linked (GlcNAc...) asparagine" evidence="2">
    <location>
        <position position="176"/>
    </location>
</feature>
<feature type="glycosylation site" description="N-linked (GlcNAc...) asparagine" evidence="2">
    <location>
        <position position="181"/>
    </location>
</feature>
<feature type="glycosylation site" description="N-linked (GlcNAc...) asparagine" evidence="2">
    <location>
        <position position="192"/>
    </location>
</feature>
<feature type="disulfide bond" evidence="14">
    <location>
        <begin position="87"/>
        <end position="162"/>
    </location>
</feature>
<feature type="strand" evidence="17">
    <location>
        <begin position="30"/>
        <end position="34"/>
    </location>
</feature>
<feature type="strand" evidence="17">
    <location>
        <begin position="43"/>
        <end position="51"/>
    </location>
</feature>
<feature type="turn" evidence="17">
    <location>
        <begin position="52"/>
        <end position="54"/>
    </location>
</feature>
<feature type="strand" evidence="17">
    <location>
        <begin position="55"/>
        <end position="63"/>
    </location>
</feature>
<feature type="helix" evidence="17">
    <location>
        <begin position="67"/>
        <end position="69"/>
    </location>
</feature>
<feature type="strand" evidence="17">
    <location>
        <begin position="74"/>
        <end position="79"/>
    </location>
</feature>
<feature type="helix" evidence="17">
    <location>
        <begin position="87"/>
        <end position="90"/>
    </location>
</feature>
<feature type="strand" evidence="18">
    <location>
        <begin position="100"/>
        <end position="102"/>
    </location>
</feature>
<feature type="helix" evidence="17">
    <location>
        <begin position="106"/>
        <end position="108"/>
    </location>
</feature>
<feature type="helix" evidence="17">
    <location>
        <begin position="114"/>
        <end position="118"/>
    </location>
</feature>
<feature type="strand" evidence="17">
    <location>
        <begin position="123"/>
        <end position="136"/>
    </location>
</feature>
<feature type="strand" evidence="17">
    <location>
        <begin position="149"/>
        <end position="153"/>
    </location>
</feature>
<feature type="strand" evidence="17">
    <location>
        <begin position="159"/>
        <end position="168"/>
    </location>
</feature>
<name>SOD5_CANAL</name>
<reference key="1">
    <citation type="journal article" date="2004" name="Proc. Natl. Acad. Sci. U.S.A.">
        <title>The diploid genome sequence of Candida albicans.</title>
        <authorList>
            <person name="Jones T."/>
            <person name="Federspiel N.A."/>
            <person name="Chibana H."/>
            <person name="Dungan J."/>
            <person name="Kalman S."/>
            <person name="Magee B.B."/>
            <person name="Newport G."/>
            <person name="Thorstenson Y.R."/>
            <person name="Agabian N."/>
            <person name="Magee P.T."/>
            <person name="Davis R.W."/>
            <person name="Scherer S."/>
        </authorList>
    </citation>
    <scope>NUCLEOTIDE SEQUENCE [LARGE SCALE GENOMIC DNA]</scope>
    <source>
        <strain>SC5314 / ATCC MYA-2876</strain>
    </source>
</reference>
<reference key="2">
    <citation type="journal article" date="2007" name="Genome Biol.">
        <title>Assembly of the Candida albicans genome into sixteen supercontigs aligned on the eight chromosomes.</title>
        <authorList>
            <person name="van het Hoog M."/>
            <person name="Rast T.J."/>
            <person name="Martchenko M."/>
            <person name="Grindle S."/>
            <person name="Dignard D."/>
            <person name="Hogues H."/>
            <person name="Cuomo C."/>
            <person name="Berriman M."/>
            <person name="Scherer S."/>
            <person name="Magee B.B."/>
            <person name="Whiteway M."/>
            <person name="Chibana H."/>
            <person name="Nantel A."/>
            <person name="Magee P.T."/>
        </authorList>
    </citation>
    <scope>GENOME REANNOTATION</scope>
    <source>
        <strain>SC5314 / ATCC MYA-2876</strain>
    </source>
</reference>
<reference key="3">
    <citation type="journal article" date="2013" name="Genome Biol.">
        <title>Assembly of a phased diploid Candida albicans genome facilitates allele-specific measurements and provides a simple model for repeat and indel structure.</title>
        <authorList>
            <person name="Muzzey D."/>
            <person name="Schwartz K."/>
            <person name="Weissman J.S."/>
            <person name="Sherlock G."/>
        </authorList>
    </citation>
    <scope>NUCLEOTIDE SEQUENCE [LARGE SCALE GENOMIC DNA]</scope>
    <scope>GENOME REANNOTATION</scope>
    <source>
        <strain>SC5314 / ATCC MYA-2876</strain>
    </source>
</reference>
<reference key="4">
    <citation type="journal article" date="2003" name="Yeast">
        <title>Genome-wide identification of fungal GPI proteins.</title>
        <authorList>
            <person name="De Groot P.W."/>
            <person name="Hellingwerf K.J."/>
            <person name="Klis F.M."/>
        </authorList>
    </citation>
    <scope>PREDICTION OF GPI-ANCHOR</scope>
</reference>
<reference key="5">
    <citation type="journal article" date="2004" name="Mol. Biol. Cell">
        <title>Superoxide dismutases in Candida albicans: transcriptional regulation and functional characterization of the hyphal-induced SOD5 gene.</title>
        <authorList>
            <person name="Martchenko M."/>
            <person name="Alarco A.M."/>
            <person name="Harcus D."/>
            <person name="Whiteway M."/>
        </authorList>
    </citation>
    <scope>FUNCTION</scope>
    <scope>INDUCTION</scope>
    <scope>DISRUPTION PHENOTYPE</scope>
</reference>
<reference key="6">
    <citation type="journal article" date="2005" name="Mol. Biol. Cell">
        <title>Induction of the Candida albicans filamentous growth program by relief of transcriptional repression: a genome-wide analysis.</title>
        <authorList>
            <person name="Kadosh D."/>
            <person name="Johnson A.D."/>
        </authorList>
    </citation>
    <scope>INDUCTION</scope>
</reference>
<reference key="7">
    <citation type="journal article" date="2005" name="Mol. Microbiol.">
        <title>Granulocytes govern the transcriptional response, morphology and proliferation of Candida albicans in human blood.</title>
        <authorList>
            <person name="Fradin C."/>
            <person name="De Groot P."/>
            <person name="MacCallum D."/>
            <person name="Schaller M."/>
            <person name="Klis F."/>
            <person name="Odds F.C."/>
            <person name="Hube B."/>
        </authorList>
    </citation>
    <scope>INDUCTION</scope>
</reference>
<reference key="8">
    <citation type="journal article" date="2009" name="Mol. Microbiol.">
        <title>Candida albicans cell surface superoxide dismutases degrade host-derived reactive oxygen species to escape innate immune surveillance.</title>
        <authorList>
            <person name="Frohner I.E."/>
            <person name="Bourgeois C."/>
            <person name="Yatsyk K."/>
            <person name="Majer O."/>
            <person name="Kuchler K."/>
        </authorList>
    </citation>
    <scope>FUNCTION</scope>
</reference>
<reference key="9">
    <citation type="journal article" date="2011" name="Antimicrob. Agents Chemother.">
        <title>Superoxide dismutases are involved in Candida albicans biofilm persistence against miconazole.</title>
        <authorList>
            <person name="Bink A."/>
            <person name="Vandenbosch D."/>
            <person name="Coenye T."/>
            <person name="Nelis H."/>
            <person name="Cammue B.P."/>
            <person name="Thevissen K."/>
        </authorList>
    </citation>
    <scope>FUNCTION</scope>
</reference>
<reference key="10">
    <citation type="journal article" date="2012" name="Biol. Pharm. Bull.">
        <title>Inhibitory effect of Shikonin on Candida albicans growth.</title>
        <authorList>
            <person name="Miao H."/>
            <person name="Zhao L."/>
            <person name="Li C."/>
            <person name="Shang Q."/>
            <person name="Lu H."/>
            <person name="Fu Z."/>
            <person name="Wang L."/>
            <person name="Jiang Y."/>
            <person name="Cao Y."/>
        </authorList>
    </citation>
    <scope>INDUCTION</scope>
</reference>
<reference key="11">
    <citation type="journal article" date="2012" name="PLoS ONE">
        <title>Cellular responses of Candida albicans to phagocytosis and the extracellular activities of neutrophils are critical to counteract carbohydrate starvation, oxidative and nitrosative stress.</title>
        <authorList>
            <person name="Miramon P."/>
            <person name="Dunker C."/>
            <person name="Windecker H."/>
            <person name="Bohovych I.M."/>
            <person name="Brown A.J."/>
            <person name="Kurzai O."/>
            <person name="Hube B."/>
        </authorList>
    </citation>
    <scope>INDUCTION</scope>
</reference>
<reference key="12">
    <citation type="journal article" date="2013" name="Eukaryot. Cell">
        <title>Normal adaptation of Candida albicans to the murine gastrointestinal tract requires Efg1p-dependent regulation of metabolic and host defense genes.</title>
        <authorList>
            <person name="Pierce J.V."/>
            <person name="Dignard D."/>
            <person name="Whiteway M."/>
            <person name="Kumamoto C.A."/>
        </authorList>
    </citation>
    <scope>INDUCTION</scope>
</reference>
<reference key="13">
    <citation type="journal article" date="2013" name="J. Proteomics">
        <title>Elucidation of potentially virulent factors of Candida albicans during serum adaptation by using quantitative time-course proteomics.</title>
        <authorList>
            <person name="Aoki W."/>
            <person name="Tatsukami Y."/>
            <person name="Kitahara N."/>
            <person name="Matsui K."/>
            <person name="Morisaka H."/>
            <person name="Kuroda K."/>
            <person name="Ueda M."/>
        </authorList>
    </citation>
    <scope>IDENTIFICATION BY MASS SPECTROMETRY</scope>
    <scope>INDUCTION</scope>
</reference>
<reference key="14">
    <citation type="journal article" date="2013" name="Mol. Microbiol.">
        <title>A family of secreted pathogenesis-related proteins in Candida albicans.</title>
        <authorList>
            <person name="Rohm M."/>
            <person name="Lindemann E."/>
            <person name="Hiller E."/>
            <person name="Ermert D."/>
            <person name="Lemuth K."/>
            <person name="Trkulja D."/>
            <person name="Sogukpinar O."/>
            <person name="Brunner H."/>
            <person name="Rupp S."/>
            <person name="Urban C.F."/>
            <person name="Sohn K."/>
        </authorList>
    </citation>
    <scope>IDENTIFICATION BY MASS SPECTROMETRY</scope>
    <scope>SUBCELLULAR LOCATION</scope>
    <scope>INDUCTION</scope>
</reference>
<reference key="15">
    <citation type="journal article" date="2014" name="Proc. Natl. Acad. Sci. U.S.A.">
        <title>Candida albicans SOD5 represents the prototype of an unprecedented class of Cu-only superoxide dismutases required for pathogen defense.</title>
        <authorList>
            <person name="Gleason J.E."/>
            <person name="Galaleldeen A."/>
            <person name="Peterson R.L."/>
            <person name="Taylor A.B."/>
            <person name="Holloway S.P."/>
            <person name="Waninger-Saroni J."/>
            <person name="Cormack B.P."/>
            <person name="Cabelli D.E."/>
            <person name="Hart P.J."/>
            <person name="Culotta V.C."/>
        </authorList>
    </citation>
    <scope>X-RAY CRYSTALLOGRAPHY (1.4 ANGSTROMS) OF 27-181</scope>
    <scope>COFACTOR</scope>
    <scope>DISULFIDE BOND</scope>
    <scope>SUBUNIT</scope>
    <scope>CATALYTIC ACTIVITY</scope>
    <scope>ACTIVITY REGULATION</scope>
    <scope>FUNCTION</scope>
</reference>
<organism>
    <name type="scientific">Candida albicans (strain SC5314 / ATCC MYA-2876)</name>
    <name type="common">Yeast</name>
    <dbReference type="NCBI Taxonomy" id="237561"/>
    <lineage>
        <taxon>Eukaryota</taxon>
        <taxon>Fungi</taxon>
        <taxon>Dikarya</taxon>
        <taxon>Ascomycota</taxon>
        <taxon>Saccharomycotina</taxon>
        <taxon>Pichiomycetes</taxon>
        <taxon>Debaryomycetaceae</taxon>
        <taxon>Candida/Lodderomyces clade</taxon>
        <taxon>Candida</taxon>
    </lineage>
</organism>
<evidence type="ECO:0000250" key="1"/>
<evidence type="ECO:0000255" key="2"/>
<evidence type="ECO:0000256" key="3">
    <source>
        <dbReference type="SAM" id="MobiDB-lite"/>
    </source>
</evidence>
<evidence type="ECO:0000269" key="4">
    <source>
    </source>
</evidence>
<evidence type="ECO:0000269" key="5">
    <source>
    </source>
</evidence>
<evidence type="ECO:0000269" key="6">
    <source>
    </source>
</evidence>
<evidence type="ECO:0000269" key="7">
    <source>
    </source>
</evidence>
<evidence type="ECO:0000269" key="8">
    <source>
    </source>
</evidence>
<evidence type="ECO:0000269" key="9">
    <source>
    </source>
</evidence>
<evidence type="ECO:0000269" key="10">
    <source>
    </source>
</evidence>
<evidence type="ECO:0000269" key="11">
    <source>
    </source>
</evidence>
<evidence type="ECO:0000269" key="12">
    <source>
    </source>
</evidence>
<evidence type="ECO:0000269" key="13">
    <source>
    </source>
</evidence>
<evidence type="ECO:0000269" key="14">
    <source>
    </source>
</evidence>
<evidence type="ECO:0000305" key="15"/>
<evidence type="ECO:0000305" key="16">
    <source>
    </source>
</evidence>
<evidence type="ECO:0007829" key="17">
    <source>
        <dbReference type="PDB" id="4N3T"/>
    </source>
</evidence>
<evidence type="ECO:0007829" key="18">
    <source>
        <dbReference type="PDB" id="5CU9"/>
    </source>
</evidence>
<proteinExistence type="evidence at protein level"/>